<sequence length="113" mass="12811">MGEHAIKRHMRQRKPTKHPLAQKRGARILVFTDDPRRSVLIVPGCHLDSMRREKNAYYFQDGNALVGMVVSGGTVEYDADDRTYVVQLTDGRHTTESSFEHSSPSRSPQSDDL</sequence>
<reference key="1">
    <citation type="journal article" date="1998" name="Nature">
        <title>Deciphering the biology of Mycobacterium tuberculosis from the complete genome sequence.</title>
        <authorList>
            <person name="Cole S.T."/>
            <person name="Brosch R."/>
            <person name="Parkhill J."/>
            <person name="Garnier T."/>
            <person name="Churcher C.M."/>
            <person name="Harris D.E."/>
            <person name="Gordon S.V."/>
            <person name="Eiglmeier K."/>
            <person name="Gas S."/>
            <person name="Barry C.E. III"/>
            <person name="Tekaia F."/>
            <person name="Badcock K."/>
            <person name="Basham D."/>
            <person name="Brown D."/>
            <person name="Chillingworth T."/>
            <person name="Connor R."/>
            <person name="Davies R.M."/>
            <person name="Devlin K."/>
            <person name="Feltwell T."/>
            <person name="Gentles S."/>
            <person name="Hamlin N."/>
            <person name="Holroyd S."/>
            <person name="Hornsby T."/>
            <person name="Jagels K."/>
            <person name="Krogh A."/>
            <person name="McLean J."/>
            <person name="Moule S."/>
            <person name="Murphy L.D."/>
            <person name="Oliver S."/>
            <person name="Osborne J."/>
            <person name="Quail M.A."/>
            <person name="Rajandream M.A."/>
            <person name="Rogers J."/>
            <person name="Rutter S."/>
            <person name="Seeger K."/>
            <person name="Skelton S."/>
            <person name="Squares S."/>
            <person name="Squares R."/>
            <person name="Sulston J.E."/>
            <person name="Taylor K."/>
            <person name="Whitehead S."/>
            <person name="Barrell B.G."/>
        </authorList>
    </citation>
    <scope>NUCLEOTIDE SEQUENCE [LARGE SCALE GENOMIC DNA]</scope>
    <source>
        <strain>ATCC 25618 / H37Rv</strain>
    </source>
</reference>
<reference key="2">
    <citation type="journal article" date="2001" name="Proc. Natl. Acad. Sci. U.S.A.">
        <title>Regulation of the Mycobacterium tuberculosis hypoxic response gene encoding alpha -crystallin.</title>
        <authorList>
            <person name="Sherman D.R."/>
            <person name="Voskuil M."/>
            <person name="Schnappinger D."/>
            <person name="Liao R."/>
            <person name="Harrell M.I."/>
            <person name="Schoolnik G.K."/>
        </authorList>
    </citation>
    <scope>INDUCTION BY HYPOXIA</scope>
    <source>
        <strain>ATCC 25618 / H37Rv</strain>
    </source>
</reference>
<reference key="3">
    <citation type="journal article" date="2003" name="J. Exp. Med.">
        <title>Inhibition of respiration by nitric oxide induces a Mycobacterium tuberculosis dormancy program.</title>
        <authorList>
            <person name="Voskuil M.I."/>
            <person name="Schnappinger D."/>
            <person name="Visconti K.C."/>
            <person name="Harrell M.I."/>
            <person name="Dolganov G.M."/>
            <person name="Sherman D.R."/>
            <person name="Schoolnik G.K."/>
        </authorList>
    </citation>
    <scope>INDUCTION BY NITRIC OXIDE (NO) AND BY HYPOXIA</scope>
    <scope>DORMANCY REGULON</scope>
    <source>
        <strain>ATCC 25618 / H37Rv</strain>
    </source>
</reference>
<reference key="4">
    <citation type="journal article" date="2008" name="Cell Host Microbe">
        <title>Mycobacterium tuberculosis senses host-derived carbon monoxide during macrophage infection.</title>
        <authorList>
            <person name="Shiloh M.U."/>
            <person name="Manzanillo P."/>
            <person name="Cox J.S."/>
        </authorList>
    </citation>
    <scope>INDUCTION BY CARBON MONOXIDE (CO)</scope>
    <source>
        <strain>ATCC 35801 / TMC 107 / Erdman</strain>
    </source>
</reference>
<reference key="5">
    <citation type="journal article" date="2008" name="J. Biol. Chem.">
        <title>Heme oxygenase-1-derived carbon monoxide induces the Mycobacterium tuberculosis dormancy regulon.</title>
        <authorList>
            <person name="Kumar A."/>
            <person name="Deshane J.S."/>
            <person name="Crossman D.K."/>
            <person name="Bolisetty S."/>
            <person name="Yan B.S."/>
            <person name="Kramnik I."/>
            <person name="Agarwal A."/>
            <person name="Steyn A.J."/>
        </authorList>
    </citation>
    <scope>INDUCTION BY CARBON MONOXIDE (CO)</scope>
    <scope>DORMANCY REGULON</scope>
    <source>
        <strain>ATCC 25618 / H37Rv</strain>
    </source>
</reference>
<gene>
    <name type="ordered locus">Rv0572c</name>
</gene>
<evidence type="ECO:0000256" key="1">
    <source>
        <dbReference type="SAM" id="MobiDB-lite"/>
    </source>
</evidence>
<evidence type="ECO:0000269" key="2">
    <source>
    </source>
</evidence>
<evidence type="ECO:0000269" key="3">
    <source>
    </source>
</evidence>
<evidence type="ECO:0000269" key="4">
    <source>
    </source>
</evidence>
<evidence type="ECO:0000269" key="5">
    <source>
    </source>
</evidence>
<proteinExistence type="evidence at transcript level"/>
<accession>P9WM81</accession>
<accession>L0T426</accession>
<accession>O53769</accession>
<accession>Q7D9M1</accession>
<protein>
    <recommendedName>
        <fullName>Uncharacterized protein Rv0572c</fullName>
    </recommendedName>
</protein>
<dbReference type="EMBL" id="AL123456">
    <property type="protein sequence ID" value="CCP43310.1"/>
    <property type="molecule type" value="Genomic_DNA"/>
</dbReference>
<dbReference type="PIR" id="C70933">
    <property type="entry name" value="C70933"/>
</dbReference>
<dbReference type="RefSeq" id="NP_215086.1">
    <property type="nucleotide sequence ID" value="NC_000962.3"/>
</dbReference>
<dbReference type="RefSeq" id="WP_003911226.1">
    <property type="nucleotide sequence ID" value="NZ_NVQJ01000036.1"/>
</dbReference>
<dbReference type="STRING" id="83332.Rv0572c"/>
<dbReference type="PaxDb" id="83332-Rv0572c"/>
<dbReference type="DNASU" id="887696"/>
<dbReference type="GeneID" id="887696"/>
<dbReference type="KEGG" id="mtu:Rv0572c"/>
<dbReference type="KEGG" id="mtv:RVBD_0572c"/>
<dbReference type="TubercuList" id="Rv0572c"/>
<dbReference type="eggNOG" id="ENOG5032AAA">
    <property type="taxonomic scope" value="Bacteria"/>
</dbReference>
<dbReference type="InParanoid" id="P9WM81"/>
<dbReference type="OrthoDB" id="4736900at2"/>
<dbReference type="Proteomes" id="UP000001584">
    <property type="component" value="Chromosome"/>
</dbReference>
<keyword id="KW-1185">Reference proteome</keyword>
<comment type="induction">
    <text evidence="2 3 4 5">A member of the dormancy regulon. Induced in response to reduced oxygen tension (hypoxia), low levels of nitric oxide (NO) and carbon monoxide (CO). It is hoped that this regulon will give insight into the latent, or dormant phase of infection.</text>
</comment>
<feature type="chain" id="PRO_0000392683" description="Uncharacterized protein Rv0572c">
    <location>
        <begin position="1"/>
        <end position="113"/>
    </location>
</feature>
<feature type="region of interest" description="Disordered" evidence="1">
    <location>
        <begin position="1"/>
        <end position="22"/>
    </location>
</feature>
<feature type="region of interest" description="Disordered" evidence="1">
    <location>
        <begin position="90"/>
        <end position="113"/>
    </location>
</feature>
<feature type="compositionally biased region" description="Basic and acidic residues" evidence="1">
    <location>
        <begin position="90"/>
        <end position="99"/>
    </location>
</feature>
<feature type="compositionally biased region" description="Low complexity" evidence="1">
    <location>
        <begin position="100"/>
        <end position="113"/>
    </location>
</feature>
<name>Y0572_MYCTU</name>
<organism>
    <name type="scientific">Mycobacterium tuberculosis (strain ATCC 25618 / H37Rv)</name>
    <dbReference type="NCBI Taxonomy" id="83332"/>
    <lineage>
        <taxon>Bacteria</taxon>
        <taxon>Bacillati</taxon>
        <taxon>Actinomycetota</taxon>
        <taxon>Actinomycetes</taxon>
        <taxon>Mycobacteriales</taxon>
        <taxon>Mycobacteriaceae</taxon>
        <taxon>Mycobacterium</taxon>
        <taxon>Mycobacterium tuberculosis complex</taxon>
    </lineage>
</organism>